<keyword id="KW-0997">Cell inner membrane</keyword>
<keyword id="KW-1003">Cell membrane</keyword>
<keyword id="KW-0444">Lipid biosynthesis</keyword>
<keyword id="KW-0443">Lipid metabolism</keyword>
<keyword id="KW-0472">Membrane</keyword>
<keyword id="KW-0594">Phospholipid biosynthesis</keyword>
<keyword id="KW-1208">Phospholipid metabolism</keyword>
<keyword id="KW-1185">Reference proteome</keyword>
<keyword id="KW-0808">Transferase</keyword>
<keyword id="KW-0812">Transmembrane</keyword>
<keyword id="KW-1133">Transmembrane helix</keyword>
<comment type="function">
    <text evidence="1">Catalyzes the transfer of an acyl group from acyl-phosphate (acyl-PO(4)) to glycerol-3-phosphate (G3P) to form lysophosphatidic acid (LPA). This enzyme utilizes acyl-phosphate as fatty acyl donor, but not acyl-CoA or acyl-ACP.</text>
</comment>
<comment type="catalytic activity">
    <reaction evidence="1">
        <text>an acyl phosphate + sn-glycerol 3-phosphate = a 1-acyl-sn-glycero-3-phosphate + phosphate</text>
        <dbReference type="Rhea" id="RHEA:34075"/>
        <dbReference type="ChEBI" id="CHEBI:43474"/>
        <dbReference type="ChEBI" id="CHEBI:57597"/>
        <dbReference type="ChEBI" id="CHEBI:57970"/>
        <dbReference type="ChEBI" id="CHEBI:59918"/>
        <dbReference type="EC" id="2.3.1.275"/>
    </reaction>
</comment>
<comment type="pathway">
    <text evidence="1">Lipid metabolism; phospholipid metabolism.</text>
</comment>
<comment type="subunit">
    <text evidence="1">Probably interacts with PlsX.</text>
</comment>
<comment type="subcellular location">
    <subcellularLocation>
        <location evidence="1">Cell inner membrane</location>
        <topology evidence="1">Multi-pass membrane protein</topology>
    </subcellularLocation>
</comment>
<comment type="similarity">
    <text evidence="1">Belongs to the PlsY family.</text>
</comment>
<reference key="1">
    <citation type="journal article" date="2001" name="Proc. Natl. Acad. Sci. U.S.A.">
        <title>Analysis of the chromosome sequence of the legume symbiont Sinorhizobium meliloti strain 1021.</title>
        <authorList>
            <person name="Capela D."/>
            <person name="Barloy-Hubler F."/>
            <person name="Gouzy J."/>
            <person name="Bothe G."/>
            <person name="Ampe F."/>
            <person name="Batut J."/>
            <person name="Boistard P."/>
            <person name="Becker A."/>
            <person name="Boutry M."/>
            <person name="Cadieu E."/>
            <person name="Dreano S."/>
            <person name="Gloux S."/>
            <person name="Godrie T."/>
            <person name="Goffeau A."/>
            <person name="Kahn D."/>
            <person name="Kiss E."/>
            <person name="Lelaure V."/>
            <person name="Masuy D."/>
            <person name="Pohl T."/>
            <person name="Portetelle D."/>
            <person name="Puehler A."/>
            <person name="Purnelle B."/>
            <person name="Ramsperger U."/>
            <person name="Renard C."/>
            <person name="Thebault P."/>
            <person name="Vandenbol M."/>
            <person name="Weidner S."/>
            <person name="Galibert F."/>
        </authorList>
    </citation>
    <scope>NUCLEOTIDE SEQUENCE [LARGE SCALE GENOMIC DNA]</scope>
    <source>
        <strain>1021</strain>
    </source>
</reference>
<reference key="2">
    <citation type="journal article" date="2001" name="Science">
        <title>The composite genome of the legume symbiont Sinorhizobium meliloti.</title>
        <authorList>
            <person name="Galibert F."/>
            <person name="Finan T.M."/>
            <person name="Long S.R."/>
            <person name="Puehler A."/>
            <person name="Abola P."/>
            <person name="Ampe F."/>
            <person name="Barloy-Hubler F."/>
            <person name="Barnett M.J."/>
            <person name="Becker A."/>
            <person name="Boistard P."/>
            <person name="Bothe G."/>
            <person name="Boutry M."/>
            <person name="Bowser L."/>
            <person name="Buhrmester J."/>
            <person name="Cadieu E."/>
            <person name="Capela D."/>
            <person name="Chain P."/>
            <person name="Cowie A."/>
            <person name="Davis R.W."/>
            <person name="Dreano S."/>
            <person name="Federspiel N.A."/>
            <person name="Fisher R.F."/>
            <person name="Gloux S."/>
            <person name="Godrie T."/>
            <person name="Goffeau A."/>
            <person name="Golding B."/>
            <person name="Gouzy J."/>
            <person name="Gurjal M."/>
            <person name="Hernandez-Lucas I."/>
            <person name="Hong A."/>
            <person name="Huizar L."/>
            <person name="Hyman R.W."/>
            <person name="Jones T."/>
            <person name="Kahn D."/>
            <person name="Kahn M.L."/>
            <person name="Kalman S."/>
            <person name="Keating D.H."/>
            <person name="Kiss E."/>
            <person name="Komp C."/>
            <person name="Lelaure V."/>
            <person name="Masuy D."/>
            <person name="Palm C."/>
            <person name="Peck M.C."/>
            <person name="Pohl T.M."/>
            <person name="Portetelle D."/>
            <person name="Purnelle B."/>
            <person name="Ramsperger U."/>
            <person name="Surzycki R."/>
            <person name="Thebault P."/>
            <person name="Vandenbol M."/>
            <person name="Vorhoelter F.J."/>
            <person name="Weidner S."/>
            <person name="Wells D.H."/>
            <person name="Wong K."/>
            <person name="Yeh K.-C."/>
            <person name="Batut J."/>
        </authorList>
    </citation>
    <scope>NUCLEOTIDE SEQUENCE [LARGE SCALE GENOMIC DNA]</scope>
    <source>
        <strain>1021</strain>
    </source>
</reference>
<proteinExistence type="inferred from homology"/>
<name>PLSY_RHIME</name>
<accession>Q92QL7</accession>
<feature type="chain" id="PRO_0000188437" description="Glycerol-3-phosphate acyltransferase">
    <location>
        <begin position="1"/>
        <end position="203"/>
    </location>
</feature>
<feature type="transmembrane region" description="Helical" evidence="1">
    <location>
        <begin position="13"/>
        <end position="33"/>
    </location>
</feature>
<feature type="transmembrane region" description="Helical" evidence="1">
    <location>
        <begin position="62"/>
        <end position="82"/>
    </location>
</feature>
<feature type="transmembrane region" description="Helical" evidence="1">
    <location>
        <begin position="88"/>
        <end position="108"/>
    </location>
</feature>
<feature type="transmembrane region" description="Helical" evidence="1">
    <location>
        <begin position="118"/>
        <end position="138"/>
    </location>
</feature>
<feature type="transmembrane region" description="Helical" evidence="1">
    <location>
        <begin position="159"/>
        <end position="179"/>
    </location>
</feature>
<protein>
    <recommendedName>
        <fullName evidence="1">Glycerol-3-phosphate acyltransferase</fullName>
    </recommendedName>
    <alternativeName>
        <fullName evidence="1">Acyl-PO4 G3P acyltransferase</fullName>
    </alternativeName>
    <alternativeName>
        <fullName evidence="1">Acyl-phosphate--glycerol-3-phosphate acyltransferase</fullName>
    </alternativeName>
    <alternativeName>
        <fullName evidence="1">G3P acyltransferase</fullName>
        <shortName evidence="1">GPAT</shortName>
        <ecNumber evidence="1">2.3.1.275</ecNumber>
    </alternativeName>
    <alternativeName>
        <fullName evidence="1">Lysophosphatidic acid synthase</fullName>
        <shortName evidence="1">LPA synthase</shortName>
    </alternativeName>
</protein>
<sequence>MDMFSWQLGLPSTLACLVFGYLLGSIPFGLILTRMAGLGDVRKIGSGNIGATNVLRTGNRKLAAATLLFDALKGTAAAAIASYWGVEAGIAAGFAAFLGHLFPVWLSFRGGKGVATYIGVLLGLMPVMVLLFAAIWLAMAKITRYSSLSALVATAAVPIALYAAGNGKVAGLFAVMTAIAWIKHRANIQRLLSGTESRIGEKG</sequence>
<evidence type="ECO:0000255" key="1">
    <source>
        <dbReference type="HAMAP-Rule" id="MF_01043"/>
    </source>
</evidence>
<gene>
    <name evidence="1" type="primary">plsY</name>
    <name type="ordered locus">R01302</name>
    <name type="ORF">SMc01362</name>
</gene>
<dbReference type="EC" id="2.3.1.275" evidence="1"/>
<dbReference type="EMBL" id="AL591688">
    <property type="protein sequence ID" value="CAC45881.1"/>
    <property type="molecule type" value="Genomic_DNA"/>
</dbReference>
<dbReference type="RefSeq" id="NP_385408.1">
    <property type="nucleotide sequence ID" value="NC_003047.1"/>
</dbReference>
<dbReference type="SMR" id="Q92QL7"/>
<dbReference type="EnsemblBacteria" id="CAC45881">
    <property type="protein sequence ID" value="CAC45881"/>
    <property type="gene ID" value="SMc01362"/>
</dbReference>
<dbReference type="KEGG" id="sme:SMc01362"/>
<dbReference type="PATRIC" id="fig|266834.11.peg.2716"/>
<dbReference type="eggNOG" id="COG0344">
    <property type="taxonomic scope" value="Bacteria"/>
</dbReference>
<dbReference type="HOGENOM" id="CLU_081254_1_0_5"/>
<dbReference type="OrthoDB" id="9777124at2"/>
<dbReference type="UniPathway" id="UPA00085"/>
<dbReference type="Proteomes" id="UP000001976">
    <property type="component" value="Chromosome"/>
</dbReference>
<dbReference type="GO" id="GO:0005886">
    <property type="term" value="C:plasma membrane"/>
    <property type="evidence" value="ECO:0007669"/>
    <property type="project" value="UniProtKB-SubCell"/>
</dbReference>
<dbReference type="GO" id="GO:0043772">
    <property type="term" value="F:acyl-phosphate glycerol-3-phosphate acyltransferase activity"/>
    <property type="evidence" value="ECO:0007669"/>
    <property type="project" value="UniProtKB-UniRule"/>
</dbReference>
<dbReference type="GO" id="GO:0008654">
    <property type="term" value="P:phospholipid biosynthetic process"/>
    <property type="evidence" value="ECO:0007669"/>
    <property type="project" value="UniProtKB-UniRule"/>
</dbReference>
<dbReference type="HAMAP" id="MF_01043">
    <property type="entry name" value="PlsY"/>
    <property type="match status" value="1"/>
</dbReference>
<dbReference type="InterPro" id="IPR003811">
    <property type="entry name" value="G3P_acylTferase_PlsY"/>
</dbReference>
<dbReference type="NCBIfam" id="TIGR00023">
    <property type="entry name" value="glycerol-3-phosphate 1-O-acyltransferase PlsY"/>
    <property type="match status" value="1"/>
</dbReference>
<dbReference type="PANTHER" id="PTHR30309:SF0">
    <property type="entry name" value="GLYCEROL-3-PHOSPHATE ACYLTRANSFERASE-RELATED"/>
    <property type="match status" value="1"/>
</dbReference>
<dbReference type="PANTHER" id="PTHR30309">
    <property type="entry name" value="INNER MEMBRANE PROTEIN YGIH"/>
    <property type="match status" value="1"/>
</dbReference>
<dbReference type="Pfam" id="PF02660">
    <property type="entry name" value="G3P_acyltransf"/>
    <property type="match status" value="1"/>
</dbReference>
<dbReference type="SMART" id="SM01207">
    <property type="entry name" value="G3P_acyltransf"/>
    <property type="match status" value="1"/>
</dbReference>
<organism>
    <name type="scientific">Rhizobium meliloti (strain 1021)</name>
    <name type="common">Ensifer meliloti</name>
    <name type="synonym">Sinorhizobium meliloti</name>
    <dbReference type="NCBI Taxonomy" id="266834"/>
    <lineage>
        <taxon>Bacteria</taxon>
        <taxon>Pseudomonadati</taxon>
        <taxon>Pseudomonadota</taxon>
        <taxon>Alphaproteobacteria</taxon>
        <taxon>Hyphomicrobiales</taxon>
        <taxon>Rhizobiaceae</taxon>
        <taxon>Sinorhizobium/Ensifer group</taxon>
        <taxon>Sinorhizobium</taxon>
    </lineage>
</organism>